<protein>
    <recommendedName>
        <fullName evidence="1">Phosphomethylpyrimidine synthase</fullName>
        <ecNumber evidence="1">4.1.99.17</ecNumber>
    </recommendedName>
    <alternativeName>
        <fullName evidence="1">Hydroxymethylpyrimidine phosphate synthase</fullName>
        <shortName evidence="1">HMP-P synthase</shortName>
        <shortName evidence="1">HMP-phosphate synthase</shortName>
        <shortName evidence="1">HMPP synthase</shortName>
    </alternativeName>
    <alternativeName>
        <fullName evidence="1">Thiamine biosynthesis protein ThiC</fullName>
    </alternativeName>
</protein>
<evidence type="ECO:0000255" key="1">
    <source>
        <dbReference type="HAMAP-Rule" id="MF_00089"/>
    </source>
</evidence>
<reference key="1">
    <citation type="journal article" date="1995" name="DNA Res.">
        <title>Sequence analysis of the genome of the unicellular cyanobacterium Synechocystis sp. strain PCC6803. I. Sequence features in the 1 Mb region from map positions 64% to 92% of the genome.</title>
        <authorList>
            <person name="Kaneko T."/>
            <person name="Tanaka A."/>
            <person name="Sato S."/>
            <person name="Kotani H."/>
            <person name="Sazuka T."/>
            <person name="Miyajima N."/>
            <person name="Sugiura M."/>
            <person name="Tabata S."/>
        </authorList>
    </citation>
    <scope>NUCLEOTIDE SEQUENCE [LARGE SCALE GENOMIC DNA]</scope>
    <source>
        <strain>ATCC 27184 / PCC 6803 / N-1</strain>
    </source>
</reference>
<reference key="2">
    <citation type="journal article" date="1996" name="DNA Res.">
        <title>Sequence analysis of the genome of the unicellular cyanobacterium Synechocystis sp. strain PCC6803. II. Sequence determination of the entire genome and assignment of potential protein-coding regions.</title>
        <authorList>
            <person name="Kaneko T."/>
            <person name="Sato S."/>
            <person name="Kotani H."/>
            <person name="Tanaka A."/>
            <person name="Asamizu E."/>
            <person name="Nakamura Y."/>
            <person name="Miyajima N."/>
            <person name="Hirosawa M."/>
            <person name="Sugiura M."/>
            <person name="Sasamoto S."/>
            <person name="Kimura T."/>
            <person name="Hosouchi T."/>
            <person name="Matsuno A."/>
            <person name="Muraki A."/>
            <person name="Nakazaki N."/>
            <person name="Naruo K."/>
            <person name="Okumura S."/>
            <person name="Shimpo S."/>
            <person name="Takeuchi C."/>
            <person name="Wada T."/>
            <person name="Watanabe A."/>
            <person name="Yamada M."/>
            <person name="Yasuda M."/>
            <person name="Tabata S."/>
        </authorList>
    </citation>
    <scope>NUCLEOTIDE SEQUENCE [LARGE SCALE GENOMIC DNA]</scope>
    <source>
        <strain>ATCC 27184 / PCC 6803 / Kazusa</strain>
    </source>
</reference>
<gene>
    <name evidence="1" type="primary">thiC</name>
    <name type="ordered locus">slr0118</name>
</gene>
<comment type="function">
    <text evidence="1">Catalyzes the synthesis of the hydroxymethylpyrimidine phosphate (HMP-P) moiety of thiamine from aminoimidazole ribotide (AIR) in a radical S-adenosyl-L-methionine (SAM)-dependent reaction.</text>
</comment>
<comment type="catalytic activity">
    <reaction evidence="1">
        <text>5-amino-1-(5-phospho-beta-D-ribosyl)imidazole + S-adenosyl-L-methionine = 4-amino-2-methyl-5-(phosphooxymethyl)pyrimidine + CO + 5'-deoxyadenosine + formate + L-methionine + 3 H(+)</text>
        <dbReference type="Rhea" id="RHEA:24840"/>
        <dbReference type="ChEBI" id="CHEBI:15378"/>
        <dbReference type="ChEBI" id="CHEBI:15740"/>
        <dbReference type="ChEBI" id="CHEBI:17245"/>
        <dbReference type="ChEBI" id="CHEBI:17319"/>
        <dbReference type="ChEBI" id="CHEBI:57844"/>
        <dbReference type="ChEBI" id="CHEBI:58354"/>
        <dbReference type="ChEBI" id="CHEBI:59789"/>
        <dbReference type="ChEBI" id="CHEBI:137981"/>
        <dbReference type="EC" id="4.1.99.17"/>
    </reaction>
</comment>
<comment type="cofactor">
    <cofactor evidence="1">
        <name>[4Fe-4S] cluster</name>
        <dbReference type="ChEBI" id="CHEBI:49883"/>
    </cofactor>
    <text evidence="1">Binds 1 [4Fe-4S] cluster per subunit. The cluster is coordinated with 3 cysteines and an exchangeable S-adenosyl-L-methionine.</text>
</comment>
<comment type="pathway">
    <text evidence="1">Cofactor biosynthesis; thiamine diphosphate biosynthesis.</text>
</comment>
<comment type="similarity">
    <text evidence="1">Belongs to the ThiC family.</text>
</comment>
<organism>
    <name type="scientific">Synechocystis sp. (strain ATCC 27184 / PCC 6803 / Kazusa)</name>
    <dbReference type="NCBI Taxonomy" id="1111708"/>
    <lineage>
        <taxon>Bacteria</taxon>
        <taxon>Bacillati</taxon>
        <taxon>Cyanobacteriota</taxon>
        <taxon>Cyanophyceae</taxon>
        <taxon>Synechococcales</taxon>
        <taxon>Merismopediaceae</taxon>
        <taxon>Synechocystis</taxon>
    </lineage>
</organism>
<feature type="chain" id="PRO_0000152842" description="Phosphomethylpyrimidine synthase">
    <location>
        <begin position="1"/>
        <end position="459"/>
    </location>
</feature>
<feature type="binding site" evidence="1">
    <location>
        <position position="80"/>
    </location>
    <ligand>
        <name>substrate</name>
    </ligand>
</feature>
<feature type="binding site" evidence="1">
    <location>
        <position position="109"/>
    </location>
    <ligand>
        <name>substrate</name>
    </ligand>
</feature>
<feature type="binding site" evidence="1">
    <location>
        <position position="139"/>
    </location>
    <ligand>
        <name>substrate</name>
    </ligand>
</feature>
<feature type="binding site" evidence="1">
    <location>
        <position position="175"/>
    </location>
    <ligand>
        <name>substrate</name>
    </ligand>
</feature>
<feature type="binding site" evidence="1">
    <location>
        <begin position="195"/>
        <end position="197"/>
    </location>
    <ligand>
        <name>substrate</name>
    </ligand>
</feature>
<feature type="binding site" evidence="1">
    <location>
        <begin position="236"/>
        <end position="239"/>
    </location>
    <ligand>
        <name>substrate</name>
    </ligand>
</feature>
<feature type="binding site" evidence="1">
    <location>
        <position position="275"/>
    </location>
    <ligand>
        <name>substrate</name>
    </ligand>
</feature>
<feature type="binding site" evidence="1">
    <location>
        <position position="279"/>
    </location>
    <ligand>
        <name>Zn(2+)</name>
        <dbReference type="ChEBI" id="CHEBI:29105"/>
    </ligand>
</feature>
<feature type="binding site" evidence="1">
    <location>
        <position position="302"/>
    </location>
    <ligand>
        <name>substrate</name>
    </ligand>
</feature>
<feature type="binding site" evidence="1">
    <location>
        <position position="343"/>
    </location>
    <ligand>
        <name>Zn(2+)</name>
        <dbReference type="ChEBI" id="CHEBI:29105"/>
    </ligand>
</feature>
<feature type="binding site" evidence="1">
    <location>
        <position position="423"/>
    </location>
    <ligand>
        <name>[4Fe-4S] cluster</name>
        <dbReference type="ChEBI" id="CHEBI:49883"/>
        <note>4Fe-4S-S-AdoMet</note>
    </ligand>
</feature>
<feature type="binding site" evidence="1">
    <location>
        <position position="426"/>
    </location>
    <ligand>
        <name>[4Fe-4S] cluster</name>
        <dbReference type="ChEBI" id="CHEBI:49883"/>
        <note>4Fe-4S-S-AdoMet</note>
    </ligand>
</feature>
<feature type="binding site" evidence="1">
    <location>
        <position position="431"/>
    </location>
    <ligand>
        <name>[4Fe-4S] cluster</name>
        <dbReference type="ChEBI" id="CHEBI:49883"/>
        <note>4Fe-4S-S-AdoMet</note>
    </ligand>
</feature>
<sequence length="459" mass="51137">MRTAWVAKRQGQTNVSQMHYARKGVITEEMDYVAKRENLPVELIKDEVARGRMIIPANINHTNLEPMAIGIASKCKVNANIGASPNSSNIDEEVEKLLLSVKYGADTVMDLSTGGGDLDVIRTAIINASPVPIGTVPIYQALESVHGSIENLTPDDFLHIIEKHAQQGVDYMTIHAGLLIEYLPLVKSRITGIVSRGGGIIAKWMLHHHKQNPLYTHFDEIIEIFKKYDVSFSLGDSLRPGCTHDASDDAQLSELKTLGQLTRRAWEHDVQVMVEGPGHVPIDQIEFNVKKQMEECSEAPFYVLGPLVTDIAPGYDHITSAIGAAIAGWHGTAMLCYVTPKEHLGLPNAEDVRNGLIAYKIAAHAADIARHRPGARDRDDELSKARYNFDWNRQFELSLDPERAKEYHDETLPADIYKTAEFCSMCGPKFCPMQTKVDAEMLEELEVFLAKDKEMVSQR</sequence>
<name>THIC_SYNY3</name>
<accession>Q55894</accession>
<dbReference type="EC" id="4.1.99.17" evidence="1"/>
<dbReference type="EMBL" id="BA000022">
    <property type="protein sequence ID" value="BAA10656.1"/>
    <property type="molecule type" value="Genomic_DNA"/>
</dbReference>
<dbReference type="PIR" id="S76712">
    <property type="entry name" value="S76712"/>
</dbReference>
<dbReference type="SMR" id="Q55894"/>
<dbReference type="FunCoup" id="Q55894">
    <property type="interactions" value="389"/>
</dbReference>
<dbReference type="IntAct" id="Q55894">
    <property type="interactions" value="1"/>
</dbReference>
<dbReference type="STRING" id="1148.gene:10500161"/>
<dbReference type="PaxDb" id="1148-1208488"/>
<dbReference type="EnsemblBacteria" id="BAA10656">
    <property type="protein sequence ID" value="BAA10656"/>
    <property type="gene ID" value="BAA10656"/>
</dbReference>
<dbReference type="KEGG" id="syn:slr0118"/>
<dbReference type="eggNOG" id="COG0422">
    <property type="taxonomic scope" value="Bacteria"/>
</dbReference>
<dbReference type="InParanoid" id="Q55894"/>
<dbReference type="PhylomeDB" id="Q55894"/>
<dbReference type="UniPathway" id="UPA00060"/>
<dbReference type="Proteomes" id="UP000001425">
    <property type="component" value="Chromosome"/>
</dbReference>
<dbReference type="GO" id="GO:0005829">
    <property type="term" value="C:cytosol"/>
    <property type="evidence" value="ECO:0000318"/>
    <property type="project" value="GO_Central"/>
</dbReference>
<dbReference type="GO" id="GO:0051539">
    <property type="term" value="F:4 iron, 4 sulfur cluster binding"/>
    <property type="evidence" value="ECO:0007669"/>
    <property type="project" value="UniProtKB-KW"/>
</dbReference>
<dbReference type="GO" id="GO:0016830">
    <property type="term" value="F:carbon-carbon lyase activity"/>
    <property type="evidence" value="ECO:0007669"/>
    <property type="project" value="InterPro"/>
</dbReference>
<dbReference type="GO" id="GO:0008270">
    <property type="term" value="F:zinc ion binding"/>
    <property type="evidence" value="ECO:0007669"/>
    <property type="project" value="UniProtKB-UniRule"/>
</dbReference>
<dbReference type="GO" id="GO:0009228">
    <property type="term" value="P:thiamine biosynthetic process"/>
    <property type="evidence" value="ECO:0000318"/>
    <property type="project" value="GO_Central"/>
</dbReference>
<dbReference type="GO" id="GO:0009229">
    <property type="term" value="P:thiamine diphosphate biosynthetic process"/>
    <property type="evidence" value="ECO:0007669"/>
    <property type="project" value="UniProtKB-UniRule"/>
</dbReference>
<dbReference type="FunFam" id="3.20.20.540:FF:000001">
    <property type="entry name" value="Phosphomethylpyrimidine synthase"/>
    <property type="match status" value="1"/>
</dbReference>
<dbReference type="Gene3D" id="6.10.250.620">
    <property type="match status" value="1"/>
</dbReference>
<dbReference type="Gene3D" id="3.20.20.540">
    <property type="entry name" value="Radical SAM ThiC family, central domain"/>
    <property type="match status" value="1"/>
</dbReference>
<dbReference type="HAMAP" id="MF_00089">
    <property type="entry name" value="ThiC"/>
    <property type="match status" value="1"/>
</dbReference>
<dbReference type="InterPro" id="IPR037509">
    <property type="entry name" value="ThiC"/>
</dbReference>
<dbReference type="InterPro" id="IPR038521">
    <property type="entry name" value="ThiC/Bza_core_dom"/>
</dbReference>
<dbReference type="InterPro" id="IPR002817">
    <property type="entry name" value="ThiC/BzaA/B"/>
</dbReference>
<dbReference type="NCBIfam" id="NF006763">
    <property type="entry name" value="PRK09284.1"/>
    <property type="match status" value="1"/>
</dbReference>
<dbReference type="NCBIfam" id="NF009895">
    <property type="entry name" value="PRK13352.1"/>
    <property type="match status" value="1"/>
</dbReference>
<dbReference type="NCBIfam" id="TIGR00190">
    <property type="entry name" value="thiC"/>
    <property type="match status" value="1"/>
</dbReference>
<dbReference type="PANTHER" id="PTHR30557:SF1">
    <property type="entry name" value="PHOSPHOMETHYLPYRIMIDINE SYNTHASE, CHLOROPLASTIC"/>
    <property type="match status" value="1"/>
</dbReference>
<dbReference type="PANTHER" id="PTHR30557">
    <property type="entry name" value="THIAMINE BIOSYNTHESIS PROTEIN THIC"/>
    <property type="match status" value="1"/>
</dbReference>
<dbReference type="Pfam" id="PF01964">
    <property type="entry name" value="ThiC_Rad_SAM"/>
    <property type="match status" value="1"/>
</dbReference>
<dbReference type="SFLD" id="SFLDF00407">
    <property type="entry name" value="phosphomethylpyrimidine_syntha"/>
    <property type="match status" value="1"/>
</dbReference>
<dbReference type="SFLD" id="SFLDG01114">
    <property type="entry name" value="phosphomethylpyrimidine_syntha"/>
    <property type="match status" value="1"/>
</dbReference>
<dbReference type="SFLD" id="SFLDS00113">
    <property type="entry name" value="Radical_SAM_Phosphomethylpyrim"/>
    <property type="match status" value="1"/>
</dbReference>
<keyword id="KW-0004">4Fe-4S</keyword>
<keyword id="KW-0408">Iron</keyword>
<keyword id="KW-0411">Iron-sulfur</keyword>
<keyword id="KW-0456">Lyase</keyword>
<keyword id="KW-0479">Metal-binding</keyword>
<keyword id="KW-1185">Reference proteome</keyword>
<keyword id="KW-0949">S-adenosyl-L-methionine</keyword>
<keyword id="KW-0784">Thiamine biosynthesis</keyword>
<keyword id="KW-0862">Zinc</keyword>
<proteinExistence type="inferred from homology"/>